<feature type="chain" id="PRO_0000305198" description="Microtubule-associated tumor suppressor 1 homolog">
    <location>
        <begin position="1"/>
        <end position="1210"/>
    </location>
</feature>
<feature type="region of interest" description="Disordered" evidence="5">
    <location>
        <begin position="1"/>
        <end position="21"/>
    </location>
</feature>
<feature type="region of interest" description="Disordered" evidence="5">
    <location>
        <begin position="370"/>
        <end position="404"/>
    </location>
</feature>
<feature type="region of interest" description="Disordered" evidence="5">
    <location>
        <begin position="446"/>
        <end position="482"/>
    </location>
</feature>
<feature type="region of interest" description="Disordered" evidence="5">
    <location>
        <begin position="513"/>
        <end position="545"/>
    </location>
</feature>
<feature type="region of interest" description="Disordered" evidence="5">
    <location>
        <begin position="585"/>
        <end position="618"/>
    </location>
</feature>
<feature type="region of interest" description="Disordered" evidence="5">
    <location>
        <begin position="683"/>
        <end position="771"/>
    </location>
</feature>
<feature type="region of interest" description="Disordered" evidence="5">
    <location>
        <begin position="1177"/>
        <end position="1210"/>
    </location>
</feature>
<feature type="coiled-coil region" evidence="4">
    <location>
        <begin position="876"/>
        <end position="1171"/>
    </location>
</feature>
<feature type="compositionally biased region" description="Basic and acidic residues" evidence="5">
    <location>
        <begin position="370"/>
        <end position="379"/>
    </location>
</feature>
<feature type="compositionally biased region" description="Polar residues" evidence="5">
    <location>
        <begin position="381"/>
        <end position="398"/>
    </location>
</feature>
<feature type="compositionally biased region" description="Basic and acidic residues" evidence="5">
    <location>
        <begin position="446"/>
        <end position="455"/>
    </location>
</feature>
<feature type="compositionally biased region" description="Polar residues" evidence="5">
    <location>
        <begin position="473"/>
        <end position="482"/>
    </location>
</feature>
<feature type="compositionally biased region" description="Low complexity" evidence="5">
    <location>
        <begin position="524"/>
        <end position="534"/>
    </location>
</feature>
<feature type="compositionally biased region" description="Polar residues" evidence="5">
    <location>
        <begin position="585"/>
        <end position="605"/>
    </location>
</feature>
<feature type="compositionally biased region" description="Polar residues" evidence="5">
    <location>
        <begin position="692"/>
        <end position="702"/>
    </location>
</feature>
<feature type="compositionally biased region" description="Low complexity" evidence="5">
    <location>
        <begin position="1195"/>
        <end position="1210"/>
    </location>
</feature>
<feature type="modified residue" description="Phosphoserine" evidence="16 17">
    <location>
        <position position="375"/>
    </location>
</feature>
<feature type="modified residue" description="Phosphoserine" evidence="16 17">
    <location>
        <position position="380"/>
    </location>
</feature>
<feature type="modified residue" description="Phosphoserine" evidence="3">
    <location>
        <position position="393"/>
    </location>
</feature>
<feature type="modified residue" description="Phosphoserine" evidence="3">
    <location>
        <position position="621"/>
    </location>
</feature>
<feature type="modified residue" description="Phosphoserine" evidence="2">
    <location>
        <position position="1143"/>
    </location>
</feature>
<feature type="modified residue" description="Phosphoserine" evidence="17">
    <location>
        <position position="1164"/>
    </location>
</feature>
<feature type="modified residue" description="Phosphoserine" evidence="17">
    <location>
        <position position="1185"/>
    </location>
</feature>
<feature type="modified residue" description="Phosphoserine" evidence="16">
    <location>
        <position position="1195"/>
    </location>
</feature>
<feature type="modified residue" description="Phosphoserine" evidence="2">
    <location>
        <position position="1199"/>
    </location>
</feature>
<feature type="modified residue" description="Phosphoserine" evidence="17">
    <location>
        <position position="1201"/>
    </location>
</feature>
<feature type="modified residue" description="Phosphoserine" evidence="16">
    <location>
        <position position="1203"/>
    </location>
</feature>
<feature type="modified residue" description="Phosphoserine" evidence="3">
    <location>
        <position position="1204"/>
    </location>
</feature>
<feature type="modified residue" description="Phosphoserine" evidence="16 17">
    <location>
        <position position="1208"/>
    </location>
</feature>
<feature type="splice variant" id="VSP_028279" description="In isoform 2 and isoform 3." evidence="9 10 12 13 14">
    <location>
        <begin position="1"/>
        <end position="767"/>
    </location>
</feature>
<feature type="splice variant" id="VSP_028280" description="In isoform 4." evidence="11 12">
    <location>
        <begin position="1"/>
        <end position="690"/>
    </location>
</feature>
<feature type="splice variant" id="VSP_028281" description="In isoform 4." evidence="11 12">
    <original>APKTSTTPGRSSSKPDSRSLRKTPGLKAKVGPTAACLRRKSESRTLGSDRALSPQRIRRVSGSG</original>
    <variation>MTIPGGFRSCTETDISSTIFINSTLTPPAGSERQYDATLLALLVVGSYSLCIIPLLATLTRKKS</variation>
    <location>
        <begin position="691"/>
        <end position="754"/>
    </location>
</feature>
<feature type="splice variant" id="VSP_028282" description="In isoform 2 and isoform 3." evidence="9 10 12 13 14">
    <original>KQAFQNGSGPLYLKPLVPRAHSHLLKTSPKGPSRKSLFTAFNS</original>
    <variation>MLLSPKFSLSTIHVRLTAKGLLRNLRLPSGLRKNTVIFHT</variation>
    <location>
        <begin position="768"/>
        <end position="810"/>
    </location>
</feature>
<feature type="splice variant" id="VSP_028283" description="In isoform 3." evidence="9">
    <original>FDNLNAAHETTKLEIEASHSEKVELLKKTYETSLS</original>
    <variation>LP</variation>
    <location>
        <begin position="977"/>
        <end position="1011"/>
    </location>
</feature>
<feature type="sequence conflict" description="In Ref. 6; AAH41777/AAH42206." evidence="15" ref="6">
    <original>P</original>
    <variation>S</variation>
    <location>
        <position position="401"/>
    </location>
</feature>
<feature type="sequence conflict" description="In Ref. 6; AAH41777/AAH42206." evidence="15" ref="6">
    <original>E</original>
    <variation>K</variation>
    <location>
        <position position="426"/>
    </location>
</feature>
<feature type="sequence conflict" description="In Ref. 6; AAH41777/AAH42206." evidence="15" ref="6">
    <original>R</original>
    <variation>S</variation>
    <location>
        <position position="455"/>
    </location>
</feature>
<feature type="sequence conflict" description="In Ref. 6; AAH41777/AAH42206." evidence="15" ref="6">
    <original>I</original>
    <variation>V</variation>
    <location>
        <position position="519"/>
    </location>
</feature>
<feature type="sequence conflict" description="In Ref. 6; AAH41777/AAH42206." evidence="15" ref="6">
    <original>S</original>
    <variation>N</variation>
    <location>
        <position position="525"/>
    </location>
</feature>
<feature type="sequence conflict" description="In Ref. 6; AAH41777/AAH42206." evidence="15" ref="6">
    <original>H</original>
    <variation>Q</variation>
    <location>
        <position position="541"/>
    </location>
</feature>
<feature type="sequence conflict" description="In Ref. 6; AAH89009." evidence="15" ref="6">
    <original>F</original>
    <variation>L</variation>
    <location>
        <position position="553"/>
    </location>
</feature>
<feature type="sequence conflict" description="In Ref. 6; AAH41777/AAH42206." evidence="15" ref="6">
    <original>S</original>
    <variation>G</variation>
    <location>
        <position position="556"/>
    </location>
</feature>
<feature type="sequence conflict" description="In Ref. 6; AAH41777/AAH42206." evidence="15" ref="6">
    <original>T</original>
    <variation>A</variation>
    <location>
        <position position="600"/>
    </location>
</feature>
<feature type="sequence conflict" description="In Ref. 5; BAE25537." evidence="15" ref="5">
    <original>T</original>
    <variation>A</variation>
    <location>
        <position position="646"/>
    </location>
</feature>
<feature type="sequence conflict" description="In Ref. 1; AAD49746 and 2; AAT45892." evidence="15" ref="1 2">
    <original>T</original>
    <variation>N</variation>
    <location>
        <position position="867"/>
    </location>
</feature>
<feature type="sequence conflict" description="In Ref. 2; AAT45893/AAT45894, 5; BAC26996/BAC27517 and 6; AAH43321/AAH89009." evidence="15" ref="2 5 6">
    <original>A</original>
    <variation>T</variation>
    <location>
        <position position="919"/>
    </location>
</feature>
<feature type="sequence conflict" description="In Ref. 5; BAC27517." evidence="15" ref="5">
    <location sequence="Q5HZI1-2">
        <position position="22"/>
    </location>
</feature>
<feature type="sequence conflict" description="In Ref. 5; BAC27517." evidence="15" ref="5">
    <original>S</original>
    <variation>P</variation>
    <location sequence="Q5HZI1-2">
        <position position="29"/>
    </location>
</feature>
<sequence length="1210" mass="134379">MNDDNSDRTEDGSRYVFIRDKNSNPSEYYQTSLSAQCPSVSHGDWNSDNPDAMVVDYEMDPAVDSSESVSLSHQCVEELAYPEPSSDFMGKHEFTMYSELTCQSPALVNTGKPQDLHSNCDSLEAIQDEKFDPLKPCECRSDDDYACGDSPEVLELKQTYGMKVDTANYTFIARHDIEQGQPLHAPGGLQTTVRDRNALSSCGRTPPHSSKMYVRGVNYNRENFENLQATPSKTLNTTFTVISDVLMQTDSPDVGVQGQNSLGNVTKEYTDGTRRGLIGEKEIQAVTLVSDGMEVPNGSASQEFYCVSEDDPNSETHSHGPYAQQEMGQNLRGTLPNCHVDGECPVLVPAFEKSKTRVLGSECKVTVTEDPHIDSHDNDSDIQSSTEELTLRSVSGQRGSPYEMGWGENGGAICTDKAGCMSTPVEQPPNLSFRLEPAEVKKYNNVENGPRDAKRAPNLKGEPTNMPKPNLGKSATKTNTTVGSKVRKTEIISYPTPNFKNIKAKVISRSVLQPKDTSIMKDTPSPQVTGGSSPSPGPSKHLTMMNKAPRSDFKASKKAEIPINKTHKQQFNKLITSQAAQVTTHSKNASLGVPRTTSATKSNQENVDKTGSPHAGSETGSVAAFFQKIKGILPVKMKSSECLEVTYVSHIDQISPEKGEQDGEAPMEKQELGKQATNEIFESKSLLVGSAPKTSTTPGRSSSKPDSRSLRKTPGLKAKVGPTAACLRRKSESRTLGSDRALSPQRIRRVSGSGGHAAINKYEEKPPKQAFQNGSGPLYLKPLVPRAHSHLLKTSPKGPSRKSLFTAFNSVEKGRQKNPRSLCIQTQTAPDVLSSERTLELAQYKTKCESQSGFILHLRQLLSRGNTKFEALTVVIQHLLSEREEALKQHKTLSQELVSLRGELVAASSACEKLEKARADLQTAYQEFVQKLNQQHQTDRTELENRLKDLYTAECEKLQSIYIEEAEKYKTQLQEQFDNLNAAHETTKLEIEASHSEKVELLKKTYETSLSEIKKSHEMEKKSLEDLLNEKQESLEKQINDLKSENDALNERLKSEEQKQLSREKANSKNPQVMYLEQELESLKAVLEIKNEKLHQQDMKLMKMEKLVDNNTALVDKLKRFQQENEELKARMDKHMAISRQLSTEQAALQESLEKESKVNKRLSMENEELLWKLHNGDLCSPKRSPTSSAIPFQSPRNSGSFSSPSISPR</sequence>
<keyword id="KW-0025">Alternative splicing</keyword>
<keyword id="KW-0131">Cell cycle</keyword>
<keyword id="KW-1003">Cell membrane</keyword>
<keyword id="KW-0175">Coiled coil</keyword>
<keyword id="KW-0333">Golgi apparatus</keyword>
<keyword id="KW-0472">Membrane</keyword>
<keyword id="KW-0496">Mitochondrion</keyword>
<keyword id="KW-0539">Nucleus</keyword>
<keyword id="KW-0597">Phosphoprotein</keyword>
<keyword id="KW-1185">Reference proteome</keyword>
<comment type="function">
    <text evidence="6 7 8">Cooperates with AGTR2 to inhibit ERK2 activation and cell proliferation. May be required for AGTR2 cell surface expression. Together with PTPN6, induces UBE2V2 expression upon angiotensin-II stimulation.</text>
</comment>
<comment type="subunit">
    <text evidence="6 7 8">Homodimer. Interacts with AGTR2. Interacts with PTPN6.</text>
</comment>
<comment type="subcellular location">
    <subcellularLocation>
        <location evidence="1">Mitochondrion</location>
    </subcellularLocation>
    <subcellularLocation>
        <location>Golgi apparatus</location>
    </subcellularLocation>
    <subcellularLocation>
        <location>Cell membrane</location>
    </subcellularLocation>
    <subcellularLocation>
        <location>Nucleus</location>
    </subcellularLocation>
    <text>In neurons, translocates into the nucleus after treatment with angiotensin-II.</text>
</comment>
<comment type="alternative products">
    <event type="alternative splicing"/>
    <isoform>
        <id>Q5HZI1-1</id>
        <name>1</name>
        <name>ATBP135</name>
        <sequence type="displayed"/>
    </isoform>
    <isoform>
        <id>Q5HZI1-2</id>
        <name>2</name>
        <name>ATBP50</name>
        <sequence type="described" ref="VSP_028279 VSP_028282"/>
    </isoform>
    <isoform>
        <id>Q5HZI1-3</id>
        <name>3</name>
        <sequence type="described" ref="VSP_028279 VSP_028282 VSP_028283"/>
    </isoform>
    <isoform>
        <id>Q5HZI1-4</id>
        <name>4</name>
        <name>ATBP60</name>
        <sequence type="described" ref="VSP_028280 VSP_028281"/>
    </isoform>
</comment>
<comment type="tissue specificity">
    <text evidence="7">Ubiquitously expressed, with highest levels in uterus and adrenal gland.</text>
</comment>
<comment type="similarity">
    <text evidence="15">Belongs to the MTUS1 family.</text>
</comment>
<comment type="sequence caution" evidence="15">
    <conflict type="erroneous initiation">
        <sequence resource="EMBL-CDS" id="AAH41777"/>
    </conflict>
</comment>
<comment type="sequence caution" evidence="15">
    <conflict type="erroneous initiation">
        <sequence resource="EMBL-CDS" id="AAH42206"/>
    </conflict>
</comment>
<comment type="sequence caution" evidence="15">
    <conflict type="erroneous initiation">
        <sequence resource="EMBL-CDS" id="BAC98134"/>
    </conflict>
</comment>
<dbReference type="EMBL" id="AF173380">
    <property type="protein sequence ID" value="AAD49746.1"/>
    <property type="molecule type" value="mRNA"/>
</dbReference>
<dbReference type="EMBL" id="AY626781">
    <property type="protein sequence ID" value="AAT45892.1"/>
    <property type="molecule type" value="mRNA"/>
</dbReference>
<dbReference type="EMBL" id="AY626782">
    <property type="protein sequence ID" value="AAT45893.1"/>
    <property type="molecule type" value="mRNA"/>
</dbReference>
<dbReference type="EMBL" id="AY626783">
    <property type="protein sequence ID" value="AAT45894.1"/>
    <property type="molecule type" value="mRNA"/>
</dbReference>
<dbReference type="EMBL" id="AY246699">
    <property type="protein sequence ID" value="AAO88908.1"/>
    <property type="molecule type" value="mRNA"/>
</dbReference>
<dbReference type="EMBL" id="AF493235">
    <property type="protein sequence ID" value="AAQ06609.1"/>
    <property type="molecule type" value="mRNA"/>
</dbReference>
<dbReference type="EMBL" id="AK129324">
    <property type="protein sequence ID" value="BAC98134.1"/>
    <property type="status" value="ALT_INIT"/>
    <property type="molecule type" value="mRNA"/>
</dbReference>
<dbReference type="EMBL" id="AK030510">
    <property type="protein sequence ID" value="BAC26996.1"/>
    <property type="molecule type" value="mRNA"/>
</dbReference>
<dbReference type="EMBL" id="AK031693">
    <property type="protein sequence ID" value="BAC27517.1"/>
    <property type="molecule type" value="mRNA"/>
</dbReference>
<dbReference type="EMBL" id="AK143781">
    <property type="protein sequence ID" value="BAE25537.1"/>
    <property type="molecule type" value="mRNA"/>
</dbReference>
<dbReference type="EMBL" id="BC041777">
    <property type="protein sequence ID" value="AAH41777.1"/>
    <property type="status" value="ALT_INIT"/>
    <property type="molecule type" value="mRNA"/>
</dbReference>
<dbReference type="EMBL" id="BC042206">
    <property type="protein sequence ID" value="AAH42206.1"/>
    <property type="status" value="ALT_INIT"/>
    <property type="molecule type" value="mRNA"/>
</dbReference>
<dbReference type="EMBL" id="BC043321">
    <property type="protein sequence ID" value="AAH43321.1"/>
    <property type="molecule type" value="mRNA"/>
</dbReference>
<dbReference type="EMBL" id="BC089009">
    <property type="protein sequence ID" value="AAH89009.1"/>
    <property type="molecule type" value="mRNA"/>
</dbReference>
<dbReference type="CCDS" id="CCDS40328.1">
    <molecule id="Q5HZI1-1"/>
</dbReference>
<dbReference type="CCDS" id="CCDS40329.1">
    <molecule id="Q5HZI1-4"/>
</dbReference>
<dbReference type="CCDS" id="CCDS40330.1">
    <molecule id="Q5HZI1-2"/>
</dbReference>
<dbReference type="RefSeq" id="NP_001005863.1">
    <property type="nucleotide sequence ID" value="NM_001005863.2"/>
</dbReference>
<dbReference type="RefSeq" id="NP_001005864.1">
    <property type="nucleotide sequence ID" value="NM_001005864.3"/>
</dbReference>
<dbReference type="RefSeq" id="NP_001005865.2">
    <property type="nucleotide sequence ID" value="NM_001005865.3"/>
</dbReference>
<dbReference type="RefSeq" id="NP_001273342.1">
    <property type="nucleotide sequence ID" value="NM_001286413.1"/>
</dbReference>
<dbReference type="SMR" id="Q5HZI1"/>
<dbReference type="FunCoup" id="Q5HZI1">
    <property type="interactions" value="1196"/>
</dbReference>
<dbReference type="STRING" id="10090.ENSMUSP00000059503"/>
<dbReference type="GlyGen" id="Q5HZI1">
    <property type="glycosylation" value="4 sites, 1 O-linked glycan (2 sites)"/>
</dbReference>
<dbReference type="iPTMnet" id="Q5HZI1"/>
<dbReference type="PhosphoSitePlus" id="Q5HZI1"/>
<dbReference type="jPOST" id="Q5HZI1"/>
<dbReference type="PaxDb" id="10090-ENSMUSP00000091252"/>
<dbReference type="PeptideAtlas" id="Q5HZI1"/>
<dbReference type="ProteomicsDB" id="290116">
    <molecule id="Q5HZI1-1"/>
</dbReference>
<dbReference type="ProteomicsDB" id="290117">
    <molecule id="Q5HZI1-2"/>
</dbReference>
<dbReference type="ProteomicsDB" id="290118">
    <molecule id="Q5HZI1-3"/>
</dbReference>
<dbReference type="ProteomicsDB" id="290119">
    <molecule id="Q5HZI1-4"/>
</dbReference>
<dbReference type="Pumba" id="Q5HZI1"/>
<dbReference type="DNASU" id="102103"/>
<dbReference type="GeneID" id="102103"/>
<dbReference type="KEGG" id="mmu:102103"/>
<dbReference type="UCSC" id="uc009lnk.2">
    <molecule id="Q5HZI1-2"/>
    <property type="organism name" value="mouse"/>
</dbReference>
<dbReference type="UCSC" id="uc009lnl.2">
    <molecule id="Q5HZI1-4"/>
    <property type="organism name" value="mouse"/>
</dbReference>
<dbReference type="UCSC" id="uc009lnm.1">
    <molecule id="Q5HZI1-1"/>
    <property type="organism name" value="mouse"/>
</dbReference>
<dbReference type="AGR" id="MGI:2142572"/>
<dbReference type="CTD" id="57509"/>
<dbReference type="MGI" id="MGI:2142572">
    <property type="gene designation" value="Mtus1"/>
</dbReference>
<dbReference type="eggNOG" id="ENOG502QPVG">
    <property type="taxonomic scope" value="Eukaryota"/>
</dbReference>
<dbReference type="InParanoid" id="Q5HZI1"/>
<dbReference type="OrthoDB" id="10038993at2759"/>
<dbReference type="PhylomeDB" id="Q5HZI1"/>
<dbReference type="TreeFam" id="TF333416"/>
<dbReference type="BioGRID-ORCS" id="102103">
    <property type="hits" value="2 hits in 74 CRISPR screens"/>
</dbReference>
<dbReference type="ChiTaRS" id="Mtus1">
    <property type="organism name" value="mouse"/>
</dbReference>
<dbReference type="PRO" id="PR:Q5HZI1"/>
<dbReference type="Proteomes" id="UP000000589">
    <property type="component" value="Unplaced"/>
</dbReference>
<dbReference type="RNAct" id="Q5HZI1">
    <property type="molecule type" value="protein"/>
</dbReference>
<dbReference type="GO" id="GO:0005737">
    <property type="term" value="C:cytoplasm"/>
    <property type="evidence" value="ECO:0000314"/>
    <property type="project" value="MGI"/>
</dbReference>
<dbReference type="GO" id="GO:0005794">
    <property type="term" value="C:Golgi apparatus"/>
    <property type="evidence" value="ECO:0007669"/>
    <property type="project" value="UniProtKB-SubCell"/>
</dbReference>
<dbReference type="GO" id="GO:0005739">
    <property type="term" value="C:mitochondrion"/>
    <property type="evidence" value="ECO:0007669"/>
    <property type="project" value="UniProtKB-SubCell"/>
</dbReference>
<dbReference type="GO" id="GO:0005634">
    <property type="term" value="C:nucleus"/>
    <property type="evidence" value="ECO:0007669"/>
    <property type="project" value="UniProtKB-SubCell"/>
</dbReference>
<dbReference type="GO" id="GO:0005886">
    <property type="term" value="C:plasma membrane"/>
    <property type="evidence" value="ECO:0007669"/>
    <property type="project" value="UniProtKB-SubCell"/>
</dbReference>
<dbReference type="GO" id="GO:0010758">
    <property type="term" value="P:regulation of macrophage chemotaxis"/>
    <property type="evidence" value="ECO:0000314"/>
    <property type="project" value="MGI"/>
</dbReference>
<dbReference type="InterPro" id="IPR051293">
    <property type="entry name" value="MTUS1/CCDC69"/>
</dbReference>
<dbReference type="PANTHER" id="PTHR24200:SF7">
    <property type="entry name" value="MICROTUBULE-ASSOCIATED TUMOR SUPPRESSOR 1"/>
    <property type="match status" value="1"/>
</dbReference>
<dbReference type="PANTHER" id="PTHR24200">
    <property type="entry name" value="TOUCAN, ISOFORM A"/>
    <property type="match status" value="1"/>
</dbReference>
<accession>Q5HZI1</accession>
<accession>Q3UP60</accession>
<accession>Q6ITD2</accession>
<accession>Q6ZPU5</accession>
<accession>Q80YG5</accession>
<accession>Q80YV9</accession>
<accession>Q80ZZ2</accession>
<accession>Q8BH23</accession>
<accession>Q8BMM8</accession>
<accession>Q8C0C8</accession>
<evidence type="ECO:0000250" key="1"/>
<evidence type="ECO:0000250" key="2">
    <source>
        <dbReference type="UniProtKB" id="Q6IMY1"/>
    </source>
</evidence>
<evidence type="ECO:0000250" key="3">
    <source>
        <dbReference type="UniProtKB" id="Q9ULD2"/>
    </source>
</evidence>
<evidence type="ECO:0000255" key="4"/>
<evidence type="ECO:0000256" key="5">
    <source>
        <dbReference type="SAM" id="MobiDB-lite"/>
    </source>
</evidence>
<evidence type="ECO:0000269" key="6">
    <source>
    </source>
</evidence>
<evidence type="ECO:0000269" key="7">
    <source>
    </source>
</evidence>
<evidence type="ECO:0000269" key="8">
    <source>
    </source>
</evidence>
<evidence type="ECO:0000303" key="9">
    <source>
    </source>
</evidence>
<evidence type="ECO:0000303" key="10">
    <source>
    </source>
</evidence>
<evidence type="ECO:0000303" key="11">
    <source>
    </source>
</evidence>
<evidence type="ECO:0000303" key="12">
    <source>
    </source>
</evidence>
<evidence type="ECO:0000303" key="13">
    <source>
    </source>
</evidence>
<evidence type="ECO:0000303" key="14">
    <source ref="3"/>
</evidence>
<evidence type="ECO:0000305" key="15"/>
<evidence type="ECO:0007744" key="16">
    <source>
    </source>
</evidence>
<evidence type="ECO:0007744" key="17">
    <source>
    </source>
</evidence>
<reference key="1">
    <citation type="journal article" date="2004" name="J. Biol. Chem.">
        <title>Trans-inactivation of receptor tyrosine kinases by novel angiotensin II AT2 receptor-interacting protein, ATIP.</title>
        <authorList>
            <person name="Nouet S."/>
            <person name="Amzallag N."/>
            <person name="Li J.-M."/>
            <person name="Louis S."/>
            <person name="Seitz I."/>
            <person name="Cui T.-X."/>
            <person name="Alleaume A.-M."/>
            <person name="Di Benedetto M."/>
            <person name="Boden C."/>
            <person name="Masson M."/>
            <person name="Strosberg A.D."/>
            <person name="Horiuchi M."/>
            <person name="Couraud P.-O."/>
            <person name="Nahmias C."/>
        </authorList>
    </citation>
    <scope>NUCLEOTIDE SEQUENCE [MRNA] (ISOFORM 2)</scope>
    <scope>INTERACTION WITH AGTR2</scope>
    <scope>FUNCTION</scope>
</reference>
<reference key="2">
    <citation type="journal article" date="2005" name="Arterioscler. Thromb. Vasc. Biol.">
        <title>Regulation of transport of the angiotensin AT2 receptor by a novel membrane-associated Golgi protein.</title>
        <authorList>
            <person name="Wruck C.J."/>
            <person name="Funke-Kaiser H."/>
            <person name="Pufe T."/>
            <person name="Kusserow H."/>
            <person name="Menk M."/>
            <person name="Schefe J.H."/>
            <person name="Kruse M.L."/>
            <person name="Stoll M."/>
            <person name="Unger T."/>
        </authorList>
    </citation>
    <scope>NUCLEOTIDE SEQUENCE [MRNA] (ISOFORMS 1; 2 AND 4)</scope>
    <scope>SUBUNIT</scope>
    <scope>INTERACTION WITH AGTR2</scope>
    <scope>TISSUE SPECIFICITY</scope>
    <scope>SUBCELLULAR LOCATION</scope>
    <scope>FUNCTION</scope>
    <source>
        <strain>Swiss Webster / NIH</strain>
        <tissue>Embryo</tissue>
    </source>
</reference>
<reference key="3">
    <citation type="submission" date="2003-02" db="EMBL/GenBank/DDBJ databases">
        <title>Cloning and characterization of MTSG1.</title>
        <authorList>
            <person name="Seibold S."/>
            <person name="Wanner C."/>
            <person name="Galle J."/>
        </authorList>
    </citation>
    <scope>NUCLEOTIDE SEQUENCE [MRNA] (ISOFORM 2)</scope>
    <source>
        <strain>C57BL/6N</strain>
    </source>
</reference>
<reference key="4">
    <citation type="journal article" date="2003" name="DNA Res.">
        <title>Prediction of the coding sequences of mouse homologues of KIAA gene: III. The complete nucleotide sequences of 500 mouse KIAA-homologous cDNAs identified by screening of terminal sequences of cDNA clones randomly sampled from size-fractionated libraries.</title>
        <authorList>
            <person name="Okazaki N."/>
            <person name="Kikuno R."/>
            <person name="Ohara R."/>
            <person name="Inamoto S."/>
            <person name="Koseki H."/>
            <person name="Hiraoka S."/>
            <person name="Saga Y."/>
            <person name="Nagase T."/>
            <person name="Ohara O."/>
            <person name="Koga H."/>
        </authorList>
    </citation>
    <scope>NUCLEOTIDE SEQUENCE [LARGE SCALE MRNA] (ISOFORM 3)</scope>
    <source>
        <tissue>Brain</tissue>
    </source>
</reference>
<reference key="5">
    <citation type="journal article" date="2005" name="Science">
        <title>The transcriptional landscape of the mammalian genome.</title>
        <authorList>
            <person name="Carninci P."/>
            <person name="Kasukawa T."/>
            <person name="Katayama S."/>
            <person name="Gough J."/>
            <person name="Frith M.C."/>
            <person name="Maeda N."/>
            <person name="Oyama R."/>
            <person name="Ravasi T."/>
            <person name="Lenhard B."/>
            <person name="Wells C."/>
            <person name="Kodzius R."/>
            <person name="Shimokawa K."/>
            <person name="Bajic V.B."/>
            <person name="Brenner S.E."/>
            <person name="Batalov S."/>
            <person name="Forrest A.R."/>
            <person name="Zavolan M."/>
            <person name="Davis M.J."/>
            <person name="Wilming L.G."/>
            <person name="Aidinis V."/>
            <person name="Allen J.E."/>
            <person name="Ambesi-Impiombato A."/>
            <person name="Apweiler R."/>
            <person name="Aturaliya R.N."/>
            <person name="Bailey T.L."/>
            <person name="Bansal M."/>
            <person name="Baxter L."/>
            <person name="Beisel K.W."/>
            <person name="Bersano T."/>
            <person name="Bono H."/>
            <person name="Chalk A.M."/>
            <person name="Chiu K.P."/>
            <person name="Choudhary V."/>
            <person name="Christoffels A."/>
            <person name="Clutterbuck D.R."/>
            <person name="Crowe M.L."/>
            <person name="Dalla E."/>
            <person name="Dalrymple B.P."/>
            <person name="de Bono B."/>
            <person name="Della Gatta G."/>
            <person name="di Bernardo D."/>
            <person name="Down T."/>
            <person name="Engstrom P."/>
            <person name="Fagiolini M."/>
            <person name="Faulkner G."/>
            <person name="Fletcher C.F."/>
            <person name="Fukushima T."/>
            <person name="Furuno M."/>
            <person name="Futaki S."/>
            <person name="Gariboldi M."/>
            <person name="Georgii-Hemming P."/>
            <person name="Gingeras T.R."/>
            <person name="Gojobori T."/>
            <person name="Green R.E."/>
            <person name="Gustincich S."/>
            <person name="Harbers M."/>
            <person name="Hayashi Y."/>
            <person name="Hensch T.K."/>
            <person name="Hirokawa N."/>
            <person name="Hill D."/>
            <person name="Huminiecki L."/>
            <person name="Iacono M."/>
            <person name="Ikeo K."/>
            <person name="Iwama A."/>
            <person name="Ishikawa T."/>
            <person name="Jakt M."/>
            <person name="Kanapin A."/>
            <person name="Katoh M."/>
            <person name="Kawasawa Y."/>
            <person name="Kelso J."/>
            <person name="Kitamura H."/>
            <person name="Kitano H."/>
            <person name="Kollias G."/>
            <person name="Krishnan S.P."/>
            <person name="Kruger A."/>
            <person name="Kummerfeld S.K."/>
            <person name="Kurochkin I.V."/>
            <person name="Lareau L.F."/>
            <person name="Lazarevic D."/>
            <person name="Lipovich L."/>
            <person name="Liu J."/>
            <person name="Liuni S."/>
            <person name="McWilliam S."/>
            <person name="Madan Babu M."/>
            <person name="Madera M."/>
            <person name="Marchionni L."/>
            <person name="Matsuda H."/>
            <person name="Matsuzawa S."/>
            <person name="Miki H."/>
            <person name="Mignone F."/>
            <person name="Miyake S."/>
            <person name="Morris K."/>
            <person name="Mottagui-Tabar S."/>
            <person name="Mulder N."/>
            <person name="Nakano N."/>
            <person name="Nakauchi H."/>
            <person name="Ng P."/>
            <person name="Nilsson R."/>
            <person name="Nishiguchi S."/>
            <person name="Nishikawa S."/>
            <person name="Nori F."/>
            <person name="Ohara O."/>
            <person name="Okazaki Y."/>
            <person name="Orlando V."/>
            <person name="Pang K.C."/>
            <person name="Pavan W.J."/>
            <person name="Pavesi G."/>
            <person name="Pesole G."/>
            <person name="Petrovsky N."/>
            <person name="Piazza S."/>
            <person name="Reed J."/>
            <person name="Reid J.F."/>
            <person name="Ring B.Z."/>
            <person name="Ringwald M."/>
            <person name="Rost B."/>
            <person name="Ruan Y."/>
            <person name="Salzberg S.L."/>
            <person name="Sandelin A."/>
            <person name="Schneider C."/>
            <person name="Schoenbach C."/>
            <person name="Sekiguchi K."/>
            <person name="Semple C.A."/>
            <person name="Seno S."/>
            <person name="Sessa L."/>
            <person name="Sheng Y."/>
            <person name="Shibata Y."/>
            <person name="Shimada H."/>
            <person name="Shimada K."/>
            <person name="Silva D."/>
            <person name="Sinclair B."/>
            <person name="Sperling S."/>
            <person name="Stupka E."/>
            <person name="Sugiura K."/>
            <person name="Sultana R."/>
            <person name="Takenaka Y."/>
            <person name="Taki K."/>
            <person name="Tammoja K."/>
            <person name="Tan S.L."/>
            <person name="Tang S."/>
            <person name="Taylor M.S."/>
            <person name="Tegner J."/>
            <person name="Teichmann S.A."/>
            <person name="Ueda H.R."/>
            <person name="van Nimwegen E."/>
            <person name="Verardo R."/>
            <person name="Wei C.L."/>
            <person name="Yagi K."/>
            <person name="Yamanishi H."/>
            <person name="Zabarovsky E."/>
            <person name="Zhu S."/>
            <person name="Zimmer A."/>
            <person name="Hide W."/>
            <person name="Bult C."/>
            <person name="Grimmond S.M."/>
            <person name="Teasdale R.D."/>
            <person name="Liu E.T."/>
            <person name="Brusic V."/>
            <person name="Quackenbush J."/>
            <person name="Wahlestedt C."/>
            <person name="Mattick J.S."/>
            <person name="Hume D.A."/>
            <person name="Kai C."/>
            <person name="Sasaki D."/>
            <person name="Tomaru Y."/>
            <person name="Fukuda S."/>
            <person name="Kanamori-Katayama M."/>
            <person name="Suzuki M."/>
            <person name="Aoki J."/>
            <person name="Arakawa T."/>
            <person name="Iida J."/>
            <person name="Imamura K."/>
            <person name="Itoh M."/>
            <person name="Kato T."/>
            <person name="Kawaji H."/>
            <person name="Kawagashira N."/>
            <person name="Kawashima T."/>
            <person name="Kojima M."/>
            <person name="Kondo S."/>
            <person name="Konno H."/>
            <person name="Nakano K."/>
            <person name="Ninomiya N."/>
            <person name="Nishio T."/>
            <person name="Okada M."/>
            <person name="Plessy C."/>
            <person name="Shibata K."/>
            <person name="Shiraki T."/>
            <person name="Suzuki S."/>
            <person name="Tagami M."/>
            <person name="Waki K."/>
            <person name="Watahiki A."/>
            <person name="Okamura-Oho Y."/>
            <person name="Suzuki H."/>
            <person name="Kawai J."/>
            <person name="Hayashizaki Y."/>
        </authorList>
    </citation>
    <scope>NUCLEOTIDE SEQUENCE [LARGE SCALE MRNA] (ISOFORM 2)</scope>
    <scope>NUCLEOTIDE SEQUENCE [LARGE SCALE MRNA] OF 1-759 (ISOFORM 1)</scope>
    <source>
        <strain>C57BL/6J</strain>
        <tissue>Pituitary</tissue>
        <tissue>Spleen</tissue>
        <tissue>Testis</tissue>
    </source>
</reference>
<reference key="6">
    <citation type="journal article" date="2004" name="Genome Res.">
        <title>The status, quality, and expansion of the NIH full-length cDNA project: the Mammalian Gene Collection (MGC).</title>
        <authorList>
            <consortium name="The MGC Project Team"/>
        </authorList>
    </citation>
    <scope>NUCLEOTIDE SEQUENCE [LARGE SCALE MRNA] (ISOFORMS 1 AND 4)</scope>
    <source>
        <strain>C57BL/6J</strain>
        <strain>FVB/N</strain>
        <tissue>Brain</tissue>
        <tissue>Eye</tissue>
        <tissue>Kidney</tissue>
    </source>
</reference>
<reference key="7">
    <citation type="journal article" date="2007" name="Mol. Endocrinol.">
        <title>Angiotensin II-induced neural differentiation via angiotensin II type 2 (AT2) receptor-MMS2 cascade involving interaction between AT2 receptor-interacting protein and Src homology 2 domain-containing protein-tyrosine phosphatase 1.</title>
        <authorList>
            <person name="Li J.-M."/>
            <person name="Mogi M."/>
            <person name="Tsukuda K."/>
            <person name="Tomochika H."/>
            <person name="Iwanami J."/>
            <person name="Min L.-J."/>
            <person name="Nahmias C."/>
            <person name="Iwai M."/>
            <person name="Horiuchi M."/>
        </authorList>
    </citation>
    <scope>SUBCELLULAR LOCATION</scope>
    <scope>INTERACTION WITH PTPN6</scope>
    <scope>FUNCTION</scope>
</reference>
<reference key="8">
    <citation type="journal article" date="2007" name="Proc. Natl. Acad. Sci. U.S.A.">
        <title>Large-scale phosphorylation analysis of mouse liver.</title>
        <authorList>
            <person name="Villen J."/>
            <person name="Beausoleil S.A."/>
            <person name="Gerber S.A."/>
            <person name="Gygi S.P."/>
        </authorList>
    </citation>
    <scope>PHOSPHORYLATION [LARGE SCALE ANALYSIS] AT SER-375; SER-380; SER-1195; SER-1203 AND SER-1208</scope>
    <scope>IDENTIFICATION BY MASS SPECTROMETRY [LARGE SCALE ANALYSIS]</scope>
    <source>
        <tissue>Liver</tissue>
    </source>
</reference>
<reference key="9">
    <citation type="journal article" date="2010" name="Cell">
        <title>A tissue-specific atlas of mouse protein phosphorylation and expression.</title>
        <authorList>
            <person name="Huttlin E.L."/>
            <person name="Jedrychowski M.P."/>
            <person name="Elias J.E."/>
            <person name="Goswami T."/>
            <person name="Rad R."/>
            <person name="Beausoleil S.A."/>
            <person name="Villen J."/>
            <person name="Haas W."/>
            <person name="Sowa M.E."/>
            <person name="Gygi S.P."/>
        </authorList>
    </citation>
    <scope>PHOSPHORYLATION [LARGE SCALE ANALYSIS] AT SER-375; SER-380; SER-1164; SER-1185; SER-1201 AND SER-1208</scope>
    <scope>IDENTIFICATION BY MASS SPECTROMETRY [LARGE SCALE ANALYSIS]</scope>
    <source>
        <tissue>Brain</tissue>
        <tissue>Brown adipose tissue</tissue>
        <tissue>Heart</tissue>
        <tissue>Kidney</tissue>
        <tissue>Liver</tissue>
        <tissue>Lung</tissue>
        <tissue>Pancreas</tissue>
    </source>
</reference>
<organism>
    <name type="scientific">Mus musculus</name>
    <name type="common">Mouse</name>
    <dbReference type="NCBI Taxonomy" id="10090"/>
    <lineage>
        <taxon>Eukaryota</taxon>
        <taxon>Metazoa</taxon>
        <taxon>Chordata</taxon>
        <taxon>Craniata</taxon>
        <taxon>Vertebrata</taxon>
        <taxon>Euteleostomi</taxon>
        <taxon>Mammalia</taxon>
        <taxon>Eutheria</taxon>
        <taxon>Euarchontoglires</taxon>
        <taxon>Glires</taxon>
        <taxon>Rodentia</taxon>
        <taxon>Myomorpha</taxon>
        <taxon>Muroidea</taxon>
        <taxon>Muridae</taxon>
        <taxon>Murinae</taxon>
        <taxon>Mus</taxon>
        <taxon>Mus</taxon>
    </lineage>
</organism>
<protein>
    <recommendedName>
        <fullName>Microtubule-associated tumor suppressor 1 homolog</fullName>
    </recommendedName>
    <alternativeName>
        <fullName>AT2 receptor-binding protein</fullName>
    </alternativeName>
    <alternativeName>
        <fullName>Angiotensin-II type 2 receptor-interacting protein</fullName>
    </alternativeName>
    <alternativeName>
        <fullName>Coiled-coiled tumor suppressor gene 1 protein</fullName>
    </alternativeName>
    <alternativeName>
        <fullName>Mitochondrial tumor suppressor 1 homolog</fullName>
    </alternativeName>
</protein>
<name>MTUS1_MOUSE</name>
<proteinExistence type="evidence at protein level"/>
<gene>
    <name type="primary">Mtus1</name>
    <name type="synonym">Atbp</name>
    <name type="synonym">Atip</name>
    <name type="synonym">Cctsg1</name>
    <name type="synonym">Kiaa1288</name>
    <name type="synonym">Mtsg1</name>
</gene>